<accession>O22757</accession>
<accession>Q94KB5</accession>
<accession>Q9SHM0</accession>
<organism>
    <name type="scientific">Arabidopsis thaliana</name>
    <name type="common">Mouse-ear cress</name>
    <dbReference type="NCBI Taxonomy" id="3702"/>
    <lineage>
        <taxon>Eukaryota</taxon>
        <taxon>Viridiplantae</taxon>
        <taxon>Streptophyta</taxon>
        <taxon>Embryophyta</taxon>
        <taxon>Tracheophyta</taxon>
        <taxon>Spermatophyta</taxon>
        <taxon>Magnoliopsida</taxon>
        <taxon>eudicotyledons</taxon>
        <taxon>Gunneridae</taxon>
        <taxon>Pentapetalae</taxon>
        <taxon>rosids</taxon>
        <taxon>malvids</taxon>
        <taxon>Brassicales</taxon>
        <taxon>Brassicaceae</taxon>
        <taxon>Camelineae</taxon>
        <taxon>Arabidopsis</taxon>
    </lineage>
</organism>
<feature type="chain" id="PRO_0000209938" description="MLO-like protein 8">
    <location>
        <begin position="1"/>
        <end position="593"/>
    </location>
</feature>
<feature type="topological domain" description="Extracellular" evidence="2">
    <location>
        <begin position="1"/>
        <end position="46"/>
    </location>
</feature>
<feature type="transmembrane region" description="Helical; Name=1" evidence="2">
    <location>
        <begin position="47"/>
        <end position="67"/>
    </location>
</feature>
<feature type="topological domain" description="Cytoplasmic" evidence="2">
    <location>
        <begin position="68"/>
        <end position="92"/>
    </location>
</feature>
<feature type="transmembrane region" description="Helical; Name=2" evidence="2">
    <location>
        <begin position="93"/>
        <end position="113"/>
    </location>
</feature>
<feature type="topological domain" description="Extracellular" evidence="2">
    <location>
        <begin position="114"/>
        <end position="181"/>
    </location>
</feature>
<feature type="transmembrane region" description="Helical; Name=3" evidence="2">
    <location>
        <begin position="182"/>
        <end position="202"/>
    </location>
</feature>
<feature type="topological domain" description="Cytoplasmic" evidence="2">
    <location>
        <begin position="203"/>
        <end position="304"/>
    </location>
</feature>
<feature type="transmembrane region" description="Helical; Name=4" evidence="2">
    <location>
        <begin position="305"/>
        <end position="325"/>
    </location>
</feature>
<feature type="topological domain" description="Extracellular" evidence="2">
    <location>
        <position position="326"/>
    </location>
</feature>
<feature type="transmembrane region" description="Helical; Name=5" evidence="2">
    <location>
        <begin position="327"/>
        <end position="347"/>
    </location>
</feature>
<feature type="topological domain" description="Cytoplasmic" evidence="2">
    <location>
        <begin position="348"/>
        <end position="393"/>
    </location>
</feature>
<feature type="transmembrane region" description="Helical; Name=6" evidence="2">
    <location>
        <begin position="394"/>
        <end position="414"/>
    </location>
</feature>
<feature type="topological domain" description="Extracellular" evidence="2">
    <location>
        <begin position="415"/>
        <end position="430"/>
    </location>
</feature>
<feature type="transmembrane region" description="Helical; Name=7" evidence="2">
    <location>
        <begin position="431"/>
        <end position="451"/>
    </location>
</feature>
<feature type="topological domain" description="Cytoplasmic" evidence="2">
    <location>
        <begin position="452"/>
        <end position="593"/>
    </location>
</feature>
<feature type="region of interest" description="Calmodulin-binding">
    <location>
        <begin position="465"/>
        <end position="486"/>
    </location>
</feature>
<feature type="region of interest" description="Disordered" evidence="3">
    <location>
        <begin position="481"/>
        <end position="593"/>
    </location>
</feature>
<feature type="compositionally biased region" description="Low complexity" evidence="3">
    <location>
        <begin position="489"/>
        <end position="512"/>
    </location>
</feature>
<feature type="compositionally biased region" description="Acidic residues" evidence="3">
    <location>
        <begin position="528"/>
        <end position="539"/>
    </location>
</feature>
<feature type="compositionally biased region" description="Basic and acidic residues" evidence="3">
    <location>
        <begin position="567"/>
        <end position="579"/>
    </location>
</feature>
<gene>
    <name type="primary">MLO8</name>
    <name type="ordered locus">At2g17480</name>
    <name type="ORF">F5J6.21</name>
    <name type="ORF">MJB20.4</name>
</gene>
<dbReference type="EMBL" id="AF369569">
    <property type="protein sequence ID" value="AAK53801.1"/>
    <property type="molecule type" value="mRNA"/>
</dbReference>
<dbReference type="EMBL" id="AC007584">
    <property type="protein sequence ID" value="AAD32905.2"/>
    <property type="molecule type" value="Genomic_DNA"/>
</dbReference>
<dbReference type="EMBL" id="CP002685">
    <property type="protein sequence ID" value="AEC06633.1"/>
    <property type="molecule type" value="Genomic_DNA"/>
</dbReference>
<dbReference type="EMBL" id="BT002918">
    <property type="protein sequence ID" value="AAO22734.1"/>
    <property type="molecule type" value="mRNA"/>
</dbReference>
<dbReference type="EMBL" id="BT004356">
    <property type="protein sequence ID" value="AAO42350.1"/>
    <property type="molecule type" value="mRNA"/>
</dbReference>
<dbReference type="PIR" id="F84552">
    <property type="entry name" value="F84552"/>
</dbReference>
<dbReference type="RefSeq" id="NP_565416.1">
    <property type="nucleotide sequence ID" value="NM_127302.3"/>
</dbReference>
<dbReference type="FunCoup" id="O22757">
    <property type="interactions" value="150"/>
</dbReference>
<dbReference type="STRING" id="3702.O22757"/>
<dbReference type="iPTMnet" id="O22757"/>
<dbReference type="PaxDb" id="3702-AT2G17480.1"/>
<dbReference type="ProteomicsDB" id="238343"/>
<dbReference type="EnsemblPlants" id="AT2G17480.1">
    <property type="protein sequence ID" value="AT2G17480.1"/>
    <property type="gene ID" value="AT2G17480"/>
</dbReference>
<dbReference type="GeneID" id="816254"/>
<dbReference type="Gramene" id="AT2G17480.1">
    <property type="protein sequence ID" value="AT2G17480.1"/>
    <property type="gene ID" value="AT2G17480"/>
</dbReference>
<dbReference type="KEGG" id="ath:AT2G17480"/>
<dbReference type="Araport" id="AT2G17480"/>
<dbReference type="TAIR" id="AT2G17480">
    <property type="gene designation" value="MLO8"/>
</dbReference>
<dbReference type="eggNOG" id="ENOG502QPZ5">
    <property type="taxonomic scope" value="Eukaryota"/>
</dbReference>
<dbReference type="HOGENOM" id="CLU_024720_1_0_1"/>
<dbReference type="InParanoid" id="O22757"/>
<dbReference type="OMA" id="KLLWYER"/>
<dbReference type="PhylomeDB" id="O22757"/>
<dbReference type="PRO" id="PR:O22757"/>
<dbReference type="Proteomes" id="UP000006548">
    <property type="component" value="Chromosome 2"/>
</dbReference>
<dbReference type="ExpressionAtlas" id="O22757">
    <property type="expression patterns" value="baseline and differential"/>
</dbReference>
<dbReference type="GO" id="GO:0005886">
    <property type="term" value="C:plasma membrane"/>
    <property type="evidence" value="ECO:0007005"/>
    <property type="project" value="TAIR"/>
</dbReference>
<dbReference type="GO" id="GO:0005516">
    <property type="term" value="F:calmodulin binding"/>
    <property type="evidence" value="ECO:0007669"/>
    <property type="project" value="UniProtKB-KW"/>
</dbReference>
<dbReference type="GO" id="GO:0006952">
    <property type="term" value="P:defense response"/>
    <property type="evidence" value="ECO:0007669"/>
    <property type="project" value="UniProtKB-KW"/>
</dbReference>
<dbReference type="InterPro" id="IPR004326">
    <property type="entry name" value="Mlo"/>
</dbReference>
<dbReference type="PANTHER" id="PTHR31942">
    <property type="entry name" value="MLO-LIKE PROTEIN 1"/>
    <property type="match status" value="1"/>
</dbReference>
<dbReference type="PANTHER" id="PTHR31942:SF49">
    <property type="entry name" value="MLO-LIKE PROTEIN 8"/>
    <property type="match status" value="1"/>
</dbReference>
<dbReference type="Pfam" id="PF03094">
    <property type="entry name" value="Mlo"/>
    <property type="match status" value="1"/>
</dbReference>
<proteinExistence type="evidence at protein level"/>
<comment type="function">
    <text evidence="1">May be involved in modulation of pathogen defense and leaf cell death. Activity seems to be regulated by Ca(2+)-dependent calmodulin binding and seems not to require heterotrimeric G proteins (By similarity).</text>
</comment>
<comment type="subcellular location">
    <subcellularLocation>
        <location evidence="1">Membrane</location>
        <topology evidence="1">Multi-pass membrane protein</topology>
    </subcellularLocation>
</comment>
<comment type="domain">
    <text evidence="1">The C-terminus contains a calmodulin-binding domain, which binds calmodulin in a calcium-dependent fashion.</text>
</comment>
<comment type="similarity">
    <text evidence="4">Belongs to the MLO family.</text>
</comment>
<reference key="1">
    <citation type="journal article" date="2003" name="J. Mol. Evol.">
        <title>Molecular phylogeny and evolution of the plant-specific seven-transmembrane MLO family.</title>
        <authorList>
            <person name="Devoto A."/>
            <person name="Hartmann H.A."/>
            <person name="Piffanelli P."/>
            <person name="Elliott C."/>
            <person name="Simmons C."/>
            <person name="Taramino G."/>
            <person name="Goh C.-S."/>
            <person name="Cohen F.E."/>
            <person name="Emerson B.C."/>
            <person name="Schulze-Lefert P."/>
            <person name="Panstruga R."/>
        </authorList>
    </citation>
    <scope>NUCLEOTIDE SEQUENCE [MRNA]</scope>
</reference>
<reference key="2">
    <citation type="journal article" date="1999" name="Nature">
        <title>Sequence and analysis of chromosome 2 of the plant Arabidopsis thaliana.</title>
        <authorList>
            <person name="Lin X."/>
            <person name="Kaul S."/>
            <person name="Rounsley S.D."/>
            <person name="Shea T.P."/>
            <person name="Benito M.-I."/>
            <person name="Town C.D."/>
            <person name="Fujii C.Y."/>
            <person name="Mason T.M."/>
            <person name="Bowman C.L."/>
            <person name="Barnstead M.E."/>
            <person name="Feldblyum T.V."/>
            <person name="Buell C.R."/>
            <person name="Ketchum K.A."/>
            <person name="Lee J.J."/>
            <person name="Ronning C.M."/>
            <person name="Koo H.L."/>
            <person name="Moffat K.S."/>
            <person name="Cronin L.A."/>
            <person name="Shen M."/>
            <person name="Pai G."/>
            <person name="Van Aken S."/>
            <person name="Umayam L."/>
            <person name="Tallon L.J."/>
            <person name="Gill J.E."/>
            <person name="Adams M.D."/>
            <person name="Carrera A.J."/>
            <person name="Creasy T.H."/>
            <person name="Goodman H.M."/>
            <person name="Somerville C.R."/>
            <person name="Copenhaver G.P."/>
            <person name="Preuss D."/>
            <person name="Nierman W.C."/>
            <person name="White O."/>
            <person name="Eisen J.A."/>
            <person name="Salzberg S.L."/>
            <person name="Fraser C.M."/>
            <person name="Venter J.C."/>
        </authorList>
    </citation>
    <scope>NUCLEOTIDE SEQUENCE [LARGE SCALE GENOMIC DNA]</scope>
    <source>
        <strain>cv. Columbia</strain>
    </source>
</reference>
<reference key="3">
    <citation type="journal article" date="2017" name="Plant J.">
        <title>Araport11: a complete reannotation of the Arabidopsis thaliana reference genome.</title>
        <authorList>
            <person name="Cheng C.Y."/>
            <person name="Krishnakumar V."/>
            <person name="Chan A.P."/>
            <person name="Thibaud-Nissen F."/>
            <person name="Schobel S."/>
            <person name="Town C.D."/>
        </authorList>
    </citation>
    <scope>GENOME REANNOTATION</scope>
    <source>
        <strain>cv. Columbia</strain>
    </source>
</reference>
<reference key="4">
    <citation type="journal article" date="2003" name="Science">
        <title>Empirical analysis of transcriptional activity in the Arabidopsis genome.</title>
        <authorList>
            <person name="Yamada K."/>
            <person name="Lim J."/>
            <person name="Dale J.M."/>
            <person name="Chen H."/>
            <person name="Shinn P."/>
            <person name="Palm C.J."/>
            <person name="Southwick A.M."/>
            <person name="Wu H.C."/>
            <person name="Kim C.J."/>
            <person name="Nguyen M."/>
            <person name="Pham P.K."/>
            <person name="Cheuk R.F."/>
            <person name="Karlin-Newmann G."/>
            <person name="Liu S.X."/>
            <person name="Lam B."/>
            <person name="Sakano H."/>
            <person name="Wu T."/>
            <person name="Yu G."/>
            <person name="Miranda M."/>
            <person name="Quach H.L."/>
            <person name="Tripp M."/>
            <person name="Chang C.H."/>
            <person name="Lee J.M."/>
            <person name="Toriumi M.J."/>
            <person name="Chan M.M."/>
            <person name="Tang C.C."/>
            <person name="Onodera C.S."/>
            <person name="Deng J.M."/>
            <person name="Akiyama K."/>
            <person name="Ansari Y."/>
            <person name="Arakawa T."/>
            <person name="Banh J."/>
            <person name="Banno F."/>
            <person name="Bowser L."/>
            <person name="Brooks S.Y."/>
            <person name="Carninci P."/>
            <person name="Chao Q."/>
            <person name="Choy N."/>
            <person name="Enju A."/>
            <person name="Goldsmith A.D."/>
            <person name="Gurjal M."/>
            <person name="Hansen N.F."/>
            <person name="Hayashizaki Y."/>
            <person name="Johnson-Hopson C."/>
            <person name="Hsuan V.W."/>
            <person name="Iida K."/>
            <person name="Karnes M."/>
            <person name="Khan S."/>
            <person name="Koesema E."/>
            <person name="Ishida J."/>
            <person name="Jiang P.X."/>
            <person name="Jones T."/>
            <person name="Kawai J."/>
            <person name="Kamiya A."/>
            <person name="Meyers C."/>
            <person name="Nakajima M."/>
            <person name="Narusaka M."/>
            <person name="Seki M."/>
            <person name="Sakurai T."/>
            <person name="Satou M."/>
            <person name="Tamse R."/>
            <person name="Vaysberg M."/>
            <person name="Wallender E.K."/>
            <person name="Wong C."/>
            <person name="Yamamura Y."/>
            <person name="Yuan S."/>
            <person name="Shinozaki K."/>
            <person name="Davis R.W."/>
            <person name="Theologis A."/>
            <person name="Ecker J.R."/>
        </authorList>
    </citation>
    <scope>NUCLEOTIDE SEQUENCE [LARGE SCALE MRNA]</scope>
    <source>
        <strain>cv. Columbia</strain>
    </source>
</reference>
<reference key="5">
    <citation type="journal article" date="2004" name="Plant Cell">
        <title>Phosphoproteomics of the Arabidopsis plasma membrane and a new phosphorylation site database.</title>
        <authorList>
            <person name="Nuehse T.S."/>
            <person name="Stensballe A."/>
            <person name="Jensen O.N."/>
            <person name="Peck S.C."/>
        </authorList>
    </citation>
    <scope>IDENTIFICATION BY MASS SPECTROMETRY [LARGE SCALE ANALYSIS]</scope>
</reference>
<reference key="6">
    <citation type="journal article" date="2009" name="Plant Physiol.">
        <title>Large-scale Arabidopsis phosphoproteome profiling reveals novel chloroplast kinase substrates and phosphorylation networks.</title>
        <authorList>
            <person name="Reiland S."/>
            <person name="Messerli G."/>
            <person name="Baerenfaller K."/>
            <person name="Gerrits B."/>
            <person name="Endler A."/>
            <person name="Grossmann J."/>
            <person name="Gruissem W."/>
            <person name="Baginsky S."/>
        </authorList>
    </citation>
    <scope>IDENTIFICATION BY MASS SPECTROMETRY [LARGE SCALE ANALYSIS]</scope>
</reference>
<evidence type="ECO:0000250" key="1"/>
<evidence type="ECO:0000255" key="2"/>
<evidence type="ECO:0000256" key="3">
    <source>
        <dbReference type="SAM" id="MobiDB-lite"/>
    </source>
</evidence>
<evidence type="ECO:0000305" key="4"/>
<sequence>MGIIDGSLLRRLICLCLWCLLGGGVTVVTAEDEKKVVHKQLNQTPTWAVAAVCTFFIVVSVLLEKLLHKVGKVLWDRHKTALLDALEKIKAELMVLGFISLLLTFGQTYILDICIPSHVARTMLPCPAPNLKKEDDDNGESHRRLLSFEHRFLSGGEASPTKCTKEGYVELISAEALHQLHILIFFLAIFHVLYSFLTMMLGRLKIRGWKHWENETSSHNYEFSTDTSRFRLTHETSFVRAHTSFWTRIPFFFYVGCFFRQFFRSVGRTDYLTLRNGFIAVHLAPGSQFNFQKYIKRSLEDDFKVVVGVSPVLWGSFVLFLLLNIDGFKMMFIGTAIPVIIILAVGTKLQAIMTRMALGITDRHAVVQGMPLVQGNDEYFWFGRPHLILHLMHFALFQNAFQITYFFWIWYSFGSDSCYHPNFKIALVKVAIALGVLCLCSYITLPLYALVTQMGSRMKKSVFDEQTSKALKKWRMAVKKKKGVKATTKRLGGDGSASPTASTVRSTSSVRSLQRYKTTPHSMRYEGLDPETSDLDTDNEALTPPKSPPSFELVVKVEPNKTNTGETSRDTETDSKEFSFVKPAPSNESSQDR</sequence>
<protein>
    <recommendedName>
        <fullName>MLO-like protein 8</fullName>
        <shortName>AtMlo8</shortName>
    </recommendedName>
</protein>
<name>MLO8_ARATH</name>
<keyword id="KW-0112">Calmodulin-binding</keyword>
<keyword id="KW-0472">Membrane</keyword>
<keyword id="KW-0568">Pathogenesis-related protein</keyword>
<keyword id="KW-0611">Plant defense</keyword>
<keyword id="KW-1185">Reference proteome</keyword>
<keyword id="KW-0812">Transmembrane</keyword>
<keyword id="KW-1133">Transmembrane helix</keyword>